<feature type="transit peptide" description="Chloroplast" evidence="1">
    <location>
        <begin position="1"/>
        <end position="71"/>
    </location>
</feature>
<feature type="chain" id="PRO_0000394842" description="Thioredoxin-like 4, chloroplastic">
    <location>
        <begin position="72"/>
        <end position="214"/>
    </location>
</feature>
<feature type="domain" description="Thioredoxin" evidence="2">
    <location>
        <begin position="72"/>
        <end position="199"/>
    </location>
</feature>
<feature type="region of interest" description="Disordered" evidence="3">
    <location>
        <begin position="1"/>
        <end position="68"/>
    </location>
</feature>
<feature type="compositionally biased region" description="Low complexity" evidence="3">
    <location>
        <begin position="1"/>
        <end position="20"/>
    </location>
</feature>
<feature type="compositionally biased region" description="Pro residues" evidence="3">
    <location>
        <begin position="21"/>
        <end position="34"/>
    </location>
</feature>
<feature type="compositionally biased region" description="Low complexity" evidence="3">
    <location>
        <begin position="42"/>
        <end position="53"/>
    </location>
</feature>
<feature type="active site" description="Nucleophile" evidence="1">
    <location>
        <position position="117"/>
    </location>
</feature>
<feature type="active site" description="Nucleophile" evidence="1">
    <location>
        <position position="120"/>
    </location>
</feature>
<feature type="disulfide bond" description="Redox-active" evidence="2">
    <location>
        <begin position="117"/>
        <end position="120"/>
    </location>
</feature>
<protein>
    <recommendedName>
        <fullName>Thioredoxin-like 4, chloroplastic</fullName>
    </recommendedName>
    <alternativeName>
        <fullName>Lilium-type thioredoxin 3</fullName>
    </alternativeName>
</protein>
<dbReference type="EMBL" id="AP006068">
    <property type="protein sequence ID" value="BAD17754.1"/>
    <property type="molecule type" value="Genomic_DNA"/>
</dbReference>
<dbReference type="EMBL" id="AP008208">
    <property type="protein sequence ID" value="BAF09091.1"/>
    <property type="molecule type" value="Genomic_DNA"/>
</dbReference>
<dbReference type="EMBL" id="AP014958">
    <property type="protein sequence ID" value="BAS79317.1"/>
    <property type="molecule type" value="Genomic_DNA"/>
</dbReference>
<dbReference type="EMBL" id="CM000139">
    <property type="protein sequence ID" value="EEE57221.1"/>
    <property type="molecule type" value="Genomic_DNA"/>
</dbReference>
<dbReference type="EMBL" id="AK061487">
    <property type="protein sequence ID" value="BAG87960.1"/>
    <property type="molecule type" value="mRNA"/>
</dbReference>
<dbReference type="EMBL" id="AK066393">
    <property type="protein sequence ID" value="BAG89948.1"/>
    <property type="molecule type" value="mRNA"/>
</dbReference>
<dbReference type="RefSeq" id="XP_015625240.1">
    <property type="nucleotide sequence ID" value="XM_015769754.1"/>
</dbReference>
<dbReference type="SMR" id="Q6YTI3"/>
<dbReference type="FunCoup" id="Q6YTI3">
    <property type="interactions" value="1340"/>
</dbReference>
<dbReference type="STRING" id="39947.Q6YTI3"/>
<dbReference type="PaxDb" id="39947-Q6YTI3"/>
<dbReference type="EnsemblPlants" id="Os02t0567100-01">
    <property type="protein sequence ID" value="Os02t0567100-01"/>
    <property type="gene ID" value="Os02g0567100"/>
</dbReference>
<dbReference type="Gramene" id="Os02t0567100-01">
    <property type="protein sequence ID" value="Os02t0567100-01"/>
    <property type="gene ID" value="Os02g0567100"/>
</dbReference>
<dbReference type="KEGG" id="dosa:Os02g0567100"/>
<dbReference type="eggNOG" id="KOG2151">
    <property type="taxonomic scope" value="Eukaryota"/>
</dbReference>
<dbReference type="HOGENOM" id="CLU_097713_0_0_1"/>
<dbReference type="InParanoid" id="Q6YTI3"/>
<dbReference type="OMA" id="FIRLCKG"/>
<dbReference type="OrthoDB" id="10263751at2759"/>
<dbReference type="Proteomes" id="UP000000763">
    <property type="component" value="Chromosome 2"/>
</dbReference>
<dbReference type="Proteomes" id="UP000007752">
    <property type="component" value="Chromosome 2"/>
</dbReference>
<dbReference type="Proteomes" id="UP000059680">
    <property type="component" value="Chromosome 2"/>
</dbReference>
<dbReference type="GO" id="GO:0009507">
    <property type="term" value="C:chloroplast"/>
    <property type="evidence" value="ECO:0007669"/>
    <property type="project" value="UniProtKB-SubCell"/>
</dbReference>
<dbReference type="CDD" id="cd02947">
    <property type="entry name" value="TRX_family"/>
    <property type="match status" value="1"/>
</dbReference>
<dbReference type="FunFam" id="3.40.30.10:FF:000234">
    <property type="entry name" value="Thioredoxin-like 4, chloroplastic"/>
    <property type="match status" value="1"/>
</dbReference>
<dbReference type="Gene3D" id="3.40.30.10">
    <property type="entry name" value="Glutaredoxin"/>
    <property type="match status" value="1"/>
</dbReference>
<dbReference type="InterPro" id="IPR036249">
    <property type="entry name" value="Thioredoxin-like_sf"/>
</dbReference>
<dbReference type="InterPro" id="IPR013766">
    <property type="entry name" value="Thioredoxin_domain"/>
</dbReference>
<dbReference type="InterPro" id="IPR044176">
    <property type="entry name" value="TRL4_chloroplastic"/>
</dbReference>
<dbReference type="PANTHER" id="PTHR47912">
    <property type="entry name" value="THIOREDOXIN-LIKE 4, CHLOROPLASTIC"/>
    <property type="match status" value="1"/>
</dbReference>
<dbReference type="PANTHER" id="PTHR47912:SF1">
    <property type="entry name" value="THIOREDOXIN-LIKE 4, CHLOROPLASTIC"/>
    <property type="match status" value="1"/>
</dbReference>
<dbReference type="Pfam" id="PF00085">
    <property type="entry name" value="Thioredoxin"/>
    <property type="match status" value="1"/>
</dbReference>
<dbReference type="SUPFAM" id="SSF52833">
    <property type="entry name" value="Thioredoxin-like"/>
    <property type="match status" value="1"/>
</dbReference>
<dbReference type="PROSITE" id="PS51352">
    <property type="entry name" value="THIOREDOXIN_2"/>
    <property type="match status" value="1"/>
</dbReference>
<comment type="function">
    <text>Probable thiol-disulfide oxidoreductase that may participate in various redox reactions.</text>
</comment>
<comment type="subcellular location">
    <subcellularLocation>
        <location evidence="4">Plastid</location>
        <location evidence="4">Chloroplast</location>
    </subcellularLocation>
</comment>
<comment type="similarity">
    <text evidence="4">Belongs to the thioredoxin family.</text>
</comment>
<comment type="caution">
    <text evidence="4">The active site contains a CGSC motif which differs from the conserved CGPC motif.</text>
</comment>
<organism>
    <name type="scientific">Oryza sativa subsp. japonica</name>
    <name type="common">Rice</name>
    <dbReference type="NCBI Taxonomy" id="39947"/>
    <lineage>
        <taxon>Eukaryota</taxon>
        <taxon>Viridiplantae</taxon>
        <taxon>Streptophyta</taxon>
        <taxon>Embryophyta</taxon>
        <taxon>Tracheophyta</taxon>
        <taxon>Spermatophyta</taxon>
        <taxon>Magnoliopsida</taxon>
        <taxon>Liliopsida</taxon>
        <taxon>Poales</taxon>
        <taxon>Poaceae</taxon>
        <taxon>BOP clade</taxon>
        <taxon>Oryzoideae</taxon>
        <taxon>Oryzeae</taxon>
        <taxon>Oryzinae</taxon>
        <taxon>Oryza</taxon>
        <taxon>Oryza sativa</taxon>
    </lineage>
</organism>
<name>TRL4_ORYSJ</name>
<sequence>MITASLLPLPATSSSSGRRSLPPPTTTFPRPPPPLRRHRHLSSSSSSASSTESDGGGGSTNGSLPGLPPVVVEEEEEEFCPVECVTEFKTEEELARVLERAKATGALVVVDFFRPSCGSCKYIEQGFMKLCKGSGDHGSSVVFLKHNVIDEYDEQSEVADRLRIKVVPLFHFYKNGVLLEAFATRDKERIIAAIQKYTAPSSPPAESEEPSQEG</sequence>
<gene>
    <name type="ordered locus">Os02g0567100</name>
    <name type="ordered locus">LOC_Os02g35900</name>
    <name type="ORF">OsJ_07192</name>
    <name type="ORF">P0020D05.18</name>
</gene>
<proteinExistence type="evidence at transcript level"/>
<reference key="1">
    <citation type="journal article" date="2005" name="Nature">
        <title>The map-based sequence of the rice genome.</title>
        <authorList>
            <consortium name="International rice genome sequencing project (IRGSP)"/>
        </authorList>
    </citation>
    <scope>NUCLEOTIDE SEQUENCE [LARGE SCALE GENOMIC DNA]</scope>
    <source>
        <strain>cv. Nipponbare</strain>
    </source>
</reference>
<reference key="2">
    <citation type="journal article" date="2008" name="Nucleic Acids Res.">
        <title>The rice annotation project database (RAP-DB): 2008 update.</title>
        <authorList>
            <consortium name="The rice annotation project (RAP)"/>
        </authorList>
    </citation>
    <scope>GENOME REANNOTATION</scope>
    <source>
        <strain>cv. Nipponbare</strain>
    </source>
</reference>
<reference key="3">
    <citation type="journal article" date="2013" name="Rice">
        <title>Improvement of the Oryza sativa Nipponbare reference genome using next generation sequence and optical map data.</title>
        <authorList>
            <person name="Kawahara Y."/>
            <person name="de la Bastide M."/>
            <person name="Hamilton J.P."/>
            <person name="Kanamori H."/>
            <person name="McCombie W.R."/>
            <person name="Ouyang S."/>
            <person name="Schwartz D.C."/>
            <person name="Tanaka T."/>
            <person name="Wu J."/>
            <person name="Zhou S."/>
            <person name="Childs K.L."/>
            <person name="Davidson R.M."/>
            <person name="Lin H."/>
            <person name="Quesada-Ocampo L."/>
            <person name="Vaillancourt B."/>
            <person name="Sakai H."/>
            <person name="Lee S.S."/>
            <person name="Kim J."/>
            <person name="Numa H."/>
            <person name="Itoh T."/>
            <person name="Buell C.R."/>
            <person name="Matsumoto T."/>
        </authorList>
    </citation>
    <scope>GENOME REANNOTATION</scope>
    <source>
        <strain>cv. Nipponbare</strain>
    </source>
</reference>
<reference key="4">
    <citation type="journal article" date="2005" name="PLoS Biol.">
        <title>The genomes of Oryza sativa: a history of duplications.</title>
        <authorList>
            <person name="Yu J."/>
            <person name="Wang J."/>
            <person name="Lin W."/>
            <person name="Li S."/>
            <person name="Li H."/>
            <person name="Zhou J."/>
            <person name="Ni P."/>
            <person name="Dong W."/>
            <person name="Hu S."/>
            <person name="Zeng C."/>
            <person name="Zhang J."/>
            <person name="Zhang Y."/>
            <person name="Li R."/>
            <person name="Xu Z."/>
            <person name="Li S."/>
            <person name="Li X."/>
            <person name="Zheng H."/>
            <person name="Cong L."/>
            <person name="Lin L."/>
            <person name="Yin J."/>
            <person name="Geng J."/>
            <person name="Li G."/>
            <person name="Shi J."/>
            <person name="Liu J."/>
            <person name="Lv H."/>
            <person name="Li J."/>
            <person name="Wang J."/>
            <person name="Deng Y."/>
            <person name="Ran L."/>
            <person name="Shi X."/>
            <person name="Wang X."/>
            <person name="Wu Q."/>
            <person name="Li C."/>
            <person name="Ren X."/>
            <person name="Wang J."/>
            <person name="Wang X."/>
            <person name="Li D."/>
            <person name="Liu D."/>
            <person name="Zhang X."/>
            <person name="Ji Z."/>
            <person name="Zhao W."/>
            <person name="Sun Y."/>
            <person name="Zhang Z."/>
            <person name="Bao J."/>
            <person name="Han Y."/>
            <person name="Dong L."/>
            <person name="Ji J."/>
            <person name="Chen P."/>
            <person name="Wu S."/>
            <person name="Liu J."/>
            <person name="Xiao Y."/>
            <person name="Bu D."/>
            <person name="Tan J."/>
            <person name="Yang L."/>
            <person name="Ye C."/>
            <person name="Zhang J."/>
            <person name="Xu J."/>
            <person name="Zhou Y."/>
            <person name="Yu Y."/>
            <person name="Zhang B."/>
            <person name="Zhuang S."/>
            <person name="Wei H."/>
            <person name="Liu B."/>
            <person name="Lei M."/>
            <person name="Yu H."/>
            <person name="Li Y."/>
            <person name="Xu H."/>
            <person name="Wei S."/>
            <person name="He X."/>
            <person name="Fang L."/>
            <person name="Zhang Z."/>
            <person name="Zhang Y."/>
            <person name="Huang X."/>
            <person name="Su Z."/>
            <person name="Tong W."/>
            <person name="Li J."/>
            <person name="Tong Z."/>
            <person name="Li S."/>
            <person name="Ye J."/>
            <person name="Wang L."/>
            <person name="Fang L."/>
            <person name="Lei T."/>
            <person name="Chen C.-S."/>
            <person name="Chen H.-C."/>
            <person name="Xu Z."/>
            <person name="Li H."/>
            <person name="Huang H."/>
            <person name="Zhang F."/>
            <person name="Xu H."/>
            <person name="Li N."/>
            <person name="Zhao C."/>
            <person name="Li S."/>
            <person name="Dong L."/>
            <person name="Huang Y."/>
            <person name="Li L."/>
            <person name="Xi Y."/>
            <person name="Qi Q."/>
            <person name="Li W."/>
            <person name="Zhang B."/>
            <person name="Hu W."/>
            <person name="Zhang Y."/>
            <person name="Tian X."/>
            <person name="Jiao Y."/>
            <person name="Liang X."/>
            <person name="Jin J."/>
            <person name="Gao L."/>
            <person name="Zheng W."/>
            <person name="Hao B."/>
            <person name="Liu S.-M."/>
            <person name="Wang W."/>
            <person name="Yuan L."/>
            <person name="Cao M."/>
            <person name="McDermott J."/>
            <person name="Samudrala R."/>
            <person name="Wang J."/>
            <person name="Wong G.K.-S."/>
            <person name="Yang H."/>
        </authorList>
    </citation>
    <scope>NUCLEOTIDE SEQUENCE [LARGE SCALE GENOMIC DNA]</scope>
    <source>
        <strain>cv. Nipponbare</strain>
    </source>
</reference>
<reference key="5">
    <citation type="journal article" date="2003" name="Science">
        <title>Collection, mapping, and annotation of over 28,000 cDNA clones from japonica rice.</title>
        <authorList>
            <consortium name="The rice full-length cDNA consortium"/>
        </authorList>
    </citation>
    <scope>NUCLEOTIDE SEQUENCE [LARGE SCALE MRNA]</scope>
    <source>
        <strain>cv. Nipponbare</strain>
    </source>
</reference>
<reference key="6">
    <citation type="journal article" date="2009" name="Mol. Plant">
        <title>Comparative genomic study of the thioredoxin family in photosynthetic organisms with emphasis on Populus trichocarpa.</title>
        <authorList>
            <person name="Chibani K."/>
            <person name="Wingsle G."/>
            <person name="Jacquot J.P."/>
            <person name="Gelhaye E."/>
            <person name="Rouhier N."/>
        </authorList>
    </citation>
    <scope>GENE FAMILY</scope>
    <scope>NOMENCLATURE</scope>
</reference>
<accession>Q6YTI3</accession>
<accession>A0A0P0VKP7</accession>
<evidence type="ECO:0000255" key="1"/>
<evidence type="ECO:0000255" key="2">
    <source>
        <dbReference type="PROSITE-ProRule" id="PRU00691"/>
    </source>
</evidence>
<evidence type="ECO:0000256" key="3">
    <source>
        <dbReference type="SAM" id="MobiDB-lite"/>
    </source>
</evidence>
<evidence type="ECO:0000305" key="4"/>
<keyword id="KW-0150">Chloroplast</keyword>
<keyword id="KW-1015">Disulfide bond</keyword>
<keyword id="KW-0249">Electron transport</keyword>
<keyword id="KW-0934">Plastid</keyword>
<keyword id="KW-0676">Redox-active center</keyword>
<keyword id="KW-1185">Reference proteome</keyword>
<keyword id="KW-0809">Transit peptide</keyword>
<keyword id="KW-0813">Transport</keyword>